<organism>
    <name type="scientific">Neisseria meningitidis serogroup C / serotype 2a (strain ATCC 700532 / DSM 15464 / FAM18)</name>
    <dbReference type="NCBI Taxonomy" id="272831"/>
    <lineage>
        <taxon>Bacteria</taxon>
        <taxon>Pseudomonadati</taxon>
        <taxon>Pseudomonadota</taxon>
        <taxon>Betaproteobacteria</taxon>
        <taxon>Neisseriales</taxon>
        <taxon>Neisseriaceae</taxon>
        <taxon>Neisseria</taxon>
    </lineage>
</organism>
<feature type="chain" id="PRO_1000023232" description="Thymidylate kinase">
    <location>
        <begin position="1"/>
        <end position="206"/>
    </location>
</feature>
<feature type="binding site" evidence="1">
    <location>
        <begin position="10"/>
        <end position="17"/>
    </location>
    <ligand>
        <name>ATP</name>
        <dbReference type="ChEBI" id="CHEBI:30616"/>
    </ligand>
</feature>
<keyword id="KW-0067">ATP-binding</keyword>
<keyword id="KW-0418">Kinase</keyword>
<keyword id="KW-0545">Nucleotide biosynthesis</keyword>
<keyword id="KW-0547">Nucleotide-binding</keyword>
<keyword id="KW-0808">Transferase</keyword>
<comment type="function">
    <text evidence="1">Phosphorylation of dTMP to form dTDP in both de novo and salvage pathways of dTTP synthesis.</text>
</comment>
<comment type="catalytic activity">
    <reaction evidence="1">
        <text>dTMP + ATP = dTDP + ADP</text>
        <dbReference type="Rhea" id="RHEA:13517"/>
        <dbReference type="ChEBI" id="CHEBI:30616"/>
        <dbReference type="ChEBI" id="CHEBI:58369"/>
        <dbReference type="ChEBI" id="CHEBI:63528"/>
        <dbReference type="ChEBI" id="CHEBI:456216"/>
        <dbReference type="EC" id="2.7.4.9"/>
    </reaction>
</comment>
<comment type="similarity">
    <text evidence="1">Belongs to the thymidylate kinase family.</text>
</comment>
<gene>
    <name evidence="1" type="primary">tmk</name>
    <name type="ordered locus">NMC0619</name>
</gene>
<protein>
    <recommendedName>
        <fullName evidence="1">Thymidylate kinase</fullName>
        <ecNumber evidence="1">2.7.4.9</ecNumber>
    </recommendedName>
    <alternativeName>
        <fullName evidence="1">dTMP kinase</fullName>
    </alternativeName>
</protein>
<reference key="1">
    <citation type="journal article" date="2007" name="PLoS Genet.">
        <title>Meningococcal genetic variation mechanisms viewed through comparative analysis of serogroup C strain FAM18.</title>
        <authorList>
            <person name="Bentley S.D."/>
            <person name="Vernikos G.S."/>
            <person name="Snyder L.A.S."/>
            <person name="Churcher C."/>
            <person name="Arrowsmith C."/>
            <person name="Chillingworth T."/>
            <person name="Cronin A."/>
            <person name="Davis P.H."/>
            <person name="Holroyd N.E."/>
            <person name="Jagels K."/>
            <person name="Maddison M."/>
            <person name="Moule S."/>
            <person name="Rabbinowitsch E."/>
            <person name="Sharp S."/>
            <person name="Unwin L."/>
            <person name="Whitehead S."/>
            <person name="Quail M.A."/>
            <person name="Achtman M."/>
            <person name="Barrell B.G."/>
            <person name="Saunders N.J."/>
            <person name="Parkhill J."/>
        </authorList>
    </citation>
    <scope>NUCLEOTIDE SEQUENCE [LARGE SCALE GENOMIC DNA]</scope>
    <source>
        <strain>ATCC 700532 / DSM 15464 / FAM18</strain>
    </source>
</reference>
<sequence>MKPQFITLDGIDGAGKSTNLAVIKAWFERRGLPVLFTREPGGTPVGEALREILLNPETKAGLRAETLMMFAARMQHIEDVILPALSDGIHVVSDRFTDATFAYQGGGRGMPSEDIEILEHWVQGGLRPDLTLLLDVPLEVSMARIGQTREKDRFEQEQADFFMRVRSVYLNRAAACPERYAVIDSNLGLDEVRNSIEKVLDGHFGC</sequence>
<proteinExistence type="inferred from homology"/>
<dbReference type="EC" id="2.7.4.9" evidence="1"/>
<dbReference type="EMBL" id="AM421808">
    <property type="protein sequence ID" value="CAM09912.1"/>
    <property type="molecule type" value="Genomic_DNA"/>
</dbReference>
<dbReference type="RefSeq" id="WP_002221289.1">
    <property type="nucleotide sequence ID" value="NC_008767.1"/>
</dbReference>
<dbReference type="SMR" id="A1KST1"/>
<dbReference type="KEGG" id="nmc:NMC0619"/>
<dbReference type="HOGENOM" id="CLU_049131_0_2_4"/>
<dbReference type="Proteomes" id="UP000002286">
    <property type="component" value="Chromosome"/>
</dbReference>
<dbReference type="GO" id="GO:0005829">
    <property type="term" value="C:cytosol"/>
    <property type="evidence" value="ECO:0007669"/>
    <property type="project" value="TreeGrafter"/>
</dbReference>
<dbReference type="GO" id="GO:0005524">
    <property type="term" value="F:ATP binding"/>
    <property type="evidence" value="ECO:0007669"/>
    <property type="project" value="UniProtKB-UniRule"/>
</dbReference>
<dbReference type="GO" id="GO:0004798">
    <property type="term" value="F:dTMP kinase activity"/>
    <property type="evidence" value="ECO:0007669"/>
    <property type="project" value="UniProtKB-UniRule"/>
</dbReference>
<dbReference type="GO" id="GO:0006233">
    <property type="term" value="P:dTDP biosynthetic process"/>
    <property type="evidence" value="ECO:0007669"/>
    <property type="project" value="InterPro"/>
</dbReference>
<dbReference type="GO" id="GO:0006235">
    <property type="term" value="P:dTTP biosynthetic process"/>
    <property type="evidence" value="ECO:0007669"/>
    <property type="project" value="UniProtKB-UniRule"/>
</dbReference>
<dbReference type="GO" id="GO:0006227">
    <property type="term" value="P:dUDP biosynthetic process"/>
    <property type="evidence" value="ECO:0007669"/>
    <property type="project" value="TreeGrafter"/>
</dbReference>
<dbReference type="CDD" id="cd01672">
    <property type="entry name" value="TMPK"/>
    <property type="match status" value="1"/>
</dbReference>
<dbReference type="FunFam" id="3.40.50.300:FF:000225">
    <property type="entry name" value="Thymidylate kinase"/>
    <property type="match status" value="1"/>
</dbReference>
<dbReference type="Gene3D" id="3.40.50.300">
    <property type="entry name" value="P-loop containing nucleotide triphosphate hydrolases"/>
    <property type="match status" value="1"/>
</dbReference>
<dbReference type="HAMAP" id="MF_00165">
    <property type="entry name" value="Thymidylate_kinase"/>
    <property type="match status" value="1"/>
</dbReference>
<dbReference type="InterPro" id="IPR027417">
    <property type="entry name" value="P-loop_NTPase"/>
</dbReference>
<dbReference type="InterPro" id="IPR039430">
    <property type="entry name" value="Thymidylate_kin-like_dom"/>
</dbReference>
<dbReference type="InterPro" id="IPR018094">
    <property type="entry name" value="Thymidylate_kinase"/>
</dbReference>
<dbReference type="NCBIfam" id="TIGR00041">
    <property type="entry name" value="DTMP_kinase"/>
    <property type="match status" value="1"/>
</dbReference>
<dbReference type="PANTHER" id="PTHR10344">
    <property type="entry name" value="THYMIDYLATE KINASE"/>
    <property type="match status" value="1"/>
</dbReference>
<dbReference type="PANTHER" id="PTHR10344:SF4">
    <property type="entry name" value="UMP-CMP KINASE 2, MITOCHONDRIAL"/>
    <property type="match status" value="1"/>
</dbReference>
<dbReference type="Pfam" id="PF02223">
    <property type="entry name" value="Thymidylate_kin"/>
    <property type="match status" value="1"/>
</dbReference>
<dbReference type="SUPFAM" id="SSF52540">
    <property type="entry name" value="P-loop containing nucleoside triphosphate hydrolases"/>
    <property type="match status" value="1"/>
</dbReference>
<accession>A1KST1</accession>
<evidence type="ECO:0000255" key="1">
    <source>
        <dbReference type="HAMAP-Rule" id="MF_00165"/>
    </source>
</evidence>
<name>KTHY_NEIMF</name>